<proteinExistence type="predicted"/>
<accession>O83094</accession>
<protein>
    <recommendedName>
        <fullName>Uncharacterized protein TP_0055</fullName>
    </recommendedName>
</protein>
<organism>
    <name type="scientific">Treponema pallidum (strain Nichols)</name>
    <dbReference type="NCBI Taxonomy" id="243276"/>
    <lineage>
        <taxon>Bacteria</taxon>
        <taxon>Pseudomonadati</taxon>
        <taxon>Spirochaetota</taxon>
        <taxon>Spirochaetia</taxon>
        <taxon>Spirochaetales</taxon>
        <taxon>Treponemataceae</taxon>
        <taxon>Treponema</taxon>
    </lineage>
</organism>
<gene>
    <name type="ordered locus">TP_0055</name>
</gene>
<comment type="subcellular location">
    <subcellularLocation>
        <location evidence="2">Cell membrane</location>
        <topology evidence="2">Multi-pass membrane protein</topology>
    </subcellularLocation>
</comment>
<feature type="chain" id="PRO_0000202182" description="Uncharacterized protein TP_0055">
    <location>
        <begin position="1"/>
        <end position="78"/>
    </location>
</feature>
<feature type="transmembrane region" description="Helical" evidence="1">
    <location>
        <begin position="12"/>
        <end position="32"/>
    </location>
</feature>
<feature type="transmembrane region" description="Helical" evidence="1">
    <location>
        <begin position="51"/>
        <end position="71"/>
    </location>
</feature>
<dbReference type="EMBL" id="AE000520">
    <property type="protein sequence ID" value="AAC65053.1"/>
    <property type="molecule type" value="Genomic_DNA"/>
</dbReference>
<dbReference type="PIR" id="A71373">
    <property type="entry name" value="A71373"/>
</dbReference>
<dbReference type="RefSeq" id="WP_010881504.1">
    <property type="nucleotide sequence ID" value="NC_021490.2"/>
</dbReference>
<dbReference type="SMR" id="O83094"/>
<dbReference type="IntAct" id="O83094">
    <property type="interactions" value="2"/>
</dbReference>
<dbReference type="STRING" id="243276.TP_0055"/>
<dbReference type="EnsemblBacteria" id="AAC65053">
    <property type="protein sequence ID" value="AAC65053"/>
    <property type="gene ID" value="TP_0055"/>
</dbReference>
<dbReference type="KEGG" id="tpa:TP_0055"/>
<dbReference type="KEGG" id="tpw:TPANIC_0055"/>
<dbReference type="eggNOG" id="COG3630">
    <property type="taxonomic scope" value="Bacteria"/>
</dbReference>
<dbReference type="HOGENOM" id="CLU_168750_0_0_12"/>
<dbReference type="Proteomes" id="UP000000811">
    <property type="component" value="Chromosome"/>
</dbReference>
<dbReference type="GO" id="GO:0005886">
    <property type="term" value="C:plasma membrane"/>
    <property type="evidence" value="ECO:0007669"/>
    <property type="project" value="UniProtKB-SubCell"/>
</dbReference>
<dbReference type="GO" id="GO:0015081">
    <property type="term" value="F:sodium ion transmembrane transporter activity"/>
    <property type="evidence" value="ECO:0007669"/>
    <property type="project" value="InterPro"/>
</dbReference>
<dbReference type="GO" id="GO:0036376">
    <property type="term" value="P:sodium ion export across plasma membrane"/>
    <property type="evidence" value="ECO:0007669"/>
    <property type="project" value="InterPro"/>
</dbReference>
<dbReference type="InterPro" id="IPR005899">
    <property type="entry name" value="Na_pump_deCOase"/>
</dbReference>
<dbReference type="NCBIfam" id="TIGR01195">
    <property type="entry name" value="oadG_fam"/>
    <property type="match status" value="1"/>
</dbReference>
<dbReference type="Pfam" id="PF04277">
    <property type="entry name" value="OAD_gamma"/>
    <property type="match status" value="1"/>
</dbReference>
<evidence type="ECO:0000255" key="1"/>
<evidence type="ECO:0000305" key="2"/>
<name>Y055_TREPA</name>
<keyword id="KW-1003">Cell membrane</keyword>
<keyword id="KW-0472">Membrane</keyword>
<keyword id="KW-1185">Reference proteome</keyword>
<keyword id="KW-0812">Transmembrane</keyword>
<keyword id="KW-1133">Transmembrane helix</keyword>
<reference key="1">
    <citation type="journal article" date="1998" name="Science">
        <title>Complete genome sequence of Treponema pallidum, the syphilis spirochete.</title>
        <authorList>
            <person name="Fraser C.M."/>
            <person name="Norris S.J."/>
            <person name="Weinstock G.M."/>
            <person name="White O."/>
            <person name="Sutton G.G."/>
            <person name="Dodson R.J."/>
            <person name="Gwinn M.L."/>
            <person name="Hickey E.K."/>
            <person name="Clayton R.A."/>
            <person name="Ketchum K.A."/>
            <person name="Sodergren E."/>
            <person name="Hardham J.M."/>
            <person name="McLeod M.P."/>
            <person name="Salzberg S.L."/>
            <person name="Peterson J.D."/>
            <person name="Khalak H.G."/>
            <person name="Richardson D.L."/>
            <person name="Howell J.K."/>
            <person name="Chidambaram M."/>
            <person name="Utterback T.R."/>
            <person name="McDonald L.A."/>
            <person name="Artiach P."/>
            <person name="Bowman C."/>
            <person name="Cotton M.D."/>
            <person name="Fujii C."/>
            <person name="Garland S.A."/>
            <person name="Hatch B."/>
            <person name="Horst K."/>
            <person name="Roberts K.M."/>
            <person name="Sandusky M."/>
            <person name="Weidman J.F."/>
            <person name="Smith H.O."/>
            <person name="Venter J.C."/>
        </authorList>
    </citation>
    <scope>NUCLEOTIDE SEQUENCE [LARGE SCALE GENOMIC DNA]</scope>
    <source>
        <strain>Nichols</strain>
    </source>
</reference>
<sequence length="78" mass="7934">MNQIRLFAQSALVSVMGMGMVFAFLLLLICVVRCVGALVSSFGWDRGPDEGVGAAVPAGGALAAAIAVAVHEKARSTS</sequence>